<proteinExistence type="evidence at protein level"/>
<organism>
    <name type="scientific">Caenorhabditis elegans</name>
    <dbReference type="NCBI Taxonomy" id="6239"/>
    <lineage>
        <taxon>Eukaryota</taxon>
        <taxon>Metazoa</taxon>
        <taxon>Ecdysozoa</taxon>
        <taxon>Nematoda</taxon>
        <taxon>Chromadorea</taxon>
        <taxon>Rhabditida</taxon>
        <taxon>Rhabditina</taxon>
        <taxon>Rhabditomorpha</taxon>
        <taxon>Rhabditoidea</taxon>
        <taxon>Rhabditidae</taxon>
        <taxon>Peloderinae</taxon>
        <taxon>Caenorhabditis</taxon>
    </lineage>
</organism>
<name>RGS2_CAEEL</name>
<dbReference type="EMBL" id="AF220265">
    <property type="protein sequence ID" value="AAF33782.1"/>
    <property type="molecule type" value="mRNA"/>
</dbReference>
<dbReference type="EMBL" id="Z50005">
    <property type="protein sequence ID" value="CAA90295.1"/>
    <property type="molecule type" value="Genomic_DNA"/>
</dbReference>
<dbReference type="EMBL" id="Z67882">
    <property type="protein sequence ID" value="CAA90295.1"/>
    <property type="status" value="JOINED"/>
    <property type="molecule type" value="Genomic_DNA"/>
</dbReference>
<dbReference type="PIR" id="T21034">
    <property type="entry name" value="T21034"/>
</dbReference>
<dbReference type="RefSeq" id="NP_510124.2">
    <property type="nucleotide sequence ID" value="NM_077723.3"/>
</dbReference>
<dbReference type="SMR" id="P49808"/>
<dbReference type="BioGRID" id="46318">
    <property type="interactions" value="3"/>
</dbReference>
<dbReference type="DIP" id="DIP-26991N"/>
<dbReference type="FunCoup" id="P49808">
    <property type="interactions" value="356"/>
</dbReference>
<dbReference type="STRING" id="6239.F16H9.1b.1"/>
<dbReference type="PaxDb" id="6239-F16H9.1b"/>
<dbReference type="EnsemblMetazoa" id="F16H9.1a.1">
    <property type="protein sequence ID" value="F16H9.1a.1"/>
    <property type="gene ID" value="WBGene00004345"/>
</dbReference>
<dbReference type="GeneID" id="181414"/>
<dbReference type="KEGG" id="cel:CELE_F16H9.1"/>
<dbReference type="UCSC" id="F16H9.1b">
    <property type="organism name" value="c. elegans"/>
</dbReference>
<dbReference type="AGR" id="WB:WBGene00004345"/>
<dbReference type="CTD" id="181414"/>
<dbReference type="WormBase" id="F16H9.1a">
    <property type="protein sequence ID" value="CE03211"/>
    <property type="gene ID" value="WBGene00004345"/>
    <property type="gene designation" value="rgs-2"/>
</dbReference>
<dbReference type="eggNOG" id="KOG3589">
    <property type="taxonomic scope" value="Eukaryota"/>
</dbReference>
<dbReference type="GeneTree" id="ENSGT00970000196738"/>
<dbReference type="InParanoid" id="P49808"/>
<dbReference type="OrthoDB" id="10266999at2759"/>
<dbReference type="Reactome" id="R-CEL-416476">
    <property type="pathway name" value="G alpha (q) signalling events"/>
</dbReference>
<dbReference type="Reactome" id="R-CEL-418594">
    <property type="pathway name" value="G alpha (i) signalling events"/>
</dbReference>
<dbReference type="Reactome" id="R-CEL-418597">
    <property type="pathway name" value="G alpha (z) signalling events"/>
</dbReference>
<dbReference type="PRO" id="PR:P49808"/>
<dbReference type="Proteomes" id="UP000001940">
    <property type="component" value="Chromosome X"/>
</dbReference>
<dbReference type="Bgee" id="WBGene00004345">
    <property type="expression patterns" value="Expressed in pharyngeal muscle cell (C elegans) and 3 other cell types or tissues"/>
</dbReference>
<dbReference type="ExpressionAtlas" id="P49808">
    <property type="expression patterns" value="baseline and differential"/>
</dbReference>
<dbReference type="GO" id="GO:0005096">
    <property type="term" value="F:GTPase activator activity"/>
    <property type="evidence" value="ECO:0000314"/>
    <property type="project" value="WormBase"/>
</dbReference>
<dbReference type="GO" id="GO:0009968">
    <property type="term" value="P:negative regulation of signal transduction"/>
    <property type="evidence" value="ECO:0007669"/>
    <property type="project" value="UniProtKB-KW"/>
</dbReference>
<dbReference type="FunFam" id="1.10.167.10:FF:000001">
    <property type="entry name" value="Putative regulator of g-protein signaling 12"/>
    <property type="match status" value="1"/>
</dbReference>
<dbReference type="Gene3D" id="1.10.196.10">
    <property type="match status" value="1"/>
</dbReference>
<dbReference type="Gene3D" id="1.10.167.10">
    <property type="entry name" value="Regulator of G-protein Signalling 4, domain 2"/>
    <property type="match status" value="1"/>
</dbReference>
<dbReference type="InterPro" id="IPR016137">
    <property type="entry name" value="RGS"/>
</dbReference>
<dbReference type="InterPro" id="IPR036305">
    <property type="entry name" value="RGS_sf"/>
</dbReference>
<dbReference type="InterPro" id="IPR024066">
    <property type="entry name" value="RGS_subdom1/3"/>
</dbReference>
<dbReference type="InterPro" id="IPR044926">
    <property type="entry name" value="RGS_subdomain_2"/>
</dbReference>
<dbReference type="PANTHER" id="PTHR10845:SF192">
    <property type="entry name" value="DOUBLE HIT, ISOFORM B"/>
    <property type="match status" value="1"/>
</dbReference>
<dbReference type="PANTHER" id="PTHR10845">
    <property type="entry name" value="REGULATOR OF G PROTEIN SIGNALING"/>
    <property type="match status" value="1"/>
</dbReference>
<dbReference type="Pfam" id="PF00615">
    <property type="entry name" value="RGS"/>
    <property type="match status" value="1"/>
</dbReference>
<dbReference type="PRINTS" id="PR01301">
    <property type="entry name" value="RGSPROTEIN"/>
</dbReference>
<dbReference type="SMART" id="SM00315">
    <property type="entry name" value="RGS"/>
    <property type="match status" value="1"/>
</dbReference>
<dbReference type="SUPFAM" id="SSF48097">
    <property type="entry name" value="Regulator of G-protein signaling, RGS"/>
    <property type="match status" value="1"/>
</dbReference>
<dbReference type="PROSITE" id="PS50132">
    <property type="entry name" value="RGS"/>
    <property type="match status" value="1"/>
</dbReference>
<accession>P49808</accession>
<protein>
    <recommendedName>
        <fullName>Regulator of G-protein signaling rgs-2</fullName>
    </recommendedName>
</protein>
<reference key="1">
    <citation type="journal article" date="2000" name="Genes Dev.">
        <title>Multiple RGS proteins alter neural G protein signaling to allow C. elegans to rapidly change behavior when fed.</title>
        <authorList>
            <person name="Dong M.-Q."/>
            <person name="Chase D."/>
            <person name="Patikoglou G.A."/>
            <person name="Koelle M.R."/>
        </authorList>
    </citation>
    <scope>NUCLEOTIDE SEQUENCE [MRNA]</scope>
    <scope>FUNCTION</scope>
    <scope>TISSUE SPECIFICITY</scope>
</reference>
<reference key="2">
    <citation type="journal article" date="1998" name="Science">
        <title>Genome sequence of the nematode C. elegans: a platform for investigating biology.</title>
        <authorList>
            <consortium name="The C. elegans sequencing consortium"/>
        </authorList>
    </citation>
    <scope>NUCLEOTIDE SEQUENCE [LARGE SCALE GENOMIC DNA]</scope>
    <source>
        <strain>Bristol N2</strain>
    </source>
</reference>
<reference key="3">
    <citation type="journal article" date="2013" name="PLoS Genet.">
        <title>The C. elegans cGMP-dependent protein kinase EGL-4 regulates nociceptive behavioral sensitivity.</title>
        <authorList>
            <person name="Krzyzanowski M.C."/>
            <person name="Brueggemann C."/>
            <person name="Ezak M.J."/>
            <person name="Wood J.F."/>
            <person name="Michaels K.L."/>
            <person name="Jackson C.A."/>
            <person name="Juang B.T."/>
            <person name="Collins K.D."/>
            <person name="Yu M.C."/>
            <person name="L'etoile N.D."/>
            <person name="Ferkey D.M."/>
        </authorList>
    </citation>
    <scope>FUNCTION</scope>
    <scope>PHOSPHORYLATION</scope>
    <scope>DISRUPTION PHENOTYPE</scope>
    <scope>MUTAGENESIS OF SER-126</scope>
</reference>
<gene>
    <name type="primary">rgs-2</name>
    <name type="ORF">F16H9.1</name>
</gene>
<evidence type="ECO:0000255" key="1">
    <source>
        <dbReference type="PROSITE-ProRule" id="PRU00171"/>
    </source>
</evidence>
<evidence type="ECO:0000269" key="2">
    <source>
    </source>
</evidence>
<evidence type="ECO:0000269" key="3">
    <source>
    </source>
</evidence>
<feature type="chain" id="PRO_0000204238" description="Regulator of G-protein signaling rgs-2">
    <location>
        <begin position="1"/>
        <end position="169"/>
    </location>
</feature>
<feature type="domain" description="RGS" evidence="1">
    <location>
        <begin position="39"/>
        <end position="158"/>
    </location>
</feature>
<feature type="mutagenesis site" description="Hypersensitivity to quinine which may be due to loss of phosphorylation at this site." evidence="3">
    <original>S</original>
    <variation>A</variation>
    <location>
        <position position="126"/>
    </location>
</feature>
<comment type="function">
    <text evidence="2 3">Weakly inhibits G protein signaling in nervous system, interacting preferentially with the G(O) subfamily member goa-1. In vitro, it acts as a GTPase activator of goa-1. Rgs-1 and rgs-2 redundantly adjust signaling when worms are fed to allow rapid induction of egg-laying behavior (PubMed:10950865). Modulates chemotaxis responses by regulating negatively the sensitivity to quinine in ASH sensory neurons (PubMed:23874221).</text>
</comment>
<comment type="tissue specificity">
    <text evidence="2">Expressed in a subset of neurons including ventral cord and head- and tail-ganglia neurons. Also expressed in non-neuronal cells including pharyngeal and uterine muscles.</text>
</comment>
<comment type="PTM">
    <text evidence="3">May be phosphorylated and activated by egl-4.</text>
</comment>
<comment type="disruption phenotype">
    <text evidence="3">RNAi-mediated knockdown in ASH sensory neurons results in hypersensitivity to dilute quinine.</text>
</comment>
<keyword id="KW-0597">Phosphoprotein</keyword>
<keyword id="KW-1185">Reference proteome</keyword>
<keyword id="KW-0734">Signal transduction inhibitor</keyword>
<sequence length="169" mass="19594">MRLLTCDCTFMGQKHSGSVSVEKKNQENDGPPTYEIVFGWSQSFENLMKHRAGQKYFAEFLKGEYSDENILFWQACEELKREKNAEKIEEKARIIYEDFISILSPKEVSLDSRVREIVNTNMGRPSASTFDEAQNQIYTLMQRDSYPRFLASNIYKTVMGTFGIKEEAV</sequence>